<keyword id="KW-1003">Cell membrane</keyword>
<keyword id="KW-0903">Direct protein sequencing</keyword>
<keyword id="KW-0325">Glycoprotein</keyword>
<keyword id="KW-0407">Ion channel</keyword>
<keyword id="KW-0406">Ion transport</keyword>
<keyword id="KW-0472">Membrane</keyword>
<keyword id="KW-0597">Phosphoprotein</keyword>
<keyword id="KW-0630">Potassium</keyword>
<keyword id="KW-0631">Potassium channel</keyword>
<keyword id="KW-0633">Potassium transport</keyword>
<keyword id="KW-1185">Reference proteome</keyword>
<keyword id="KW-0812">Transmembrane</keyword>
<keyword id="KW-1133">Transmembrane helix</keyword>
<keyword id="KW-0813">Transport</keyword>
<keyword id="KW-0851">Voltage-gated channel</keyword>
<accession>P23299</accession>
<feature type="chain" id="PRO_0000144279" description="Potassium voltage-gated channel subfamily E member 1">
    <location>
        <begin position="1"/>
        <end position="129"/>
    </location>
</feature>
<feature type="transmembrane region" description="Helical" evidence="4">
    <location>
        <begin position="44"/>
        <end position="66"/>
    </location>
</feature>
<feature type="topological domain" description="Cytoplasmic" evidence="4">
    <location>
        <begin position="67"/>
        <end position="129"/>
    </location>
</feature>
<feature type="modified residue" description="Phosphoserine; by PKC" evidence="1">
    <location>
        <position position="102"/>
    </location>
</feature>
<feature type="glycosylation site" description="N-linked (GlcNAc...) asparagine" evidence="4">
    <location>
        <position position="5"/>
    </location>
</feature>
<feature type="glycosylation site" description="O-linked (GalNAc...) threonine" evidence="1">
    <location>
        <position position="7"/>
    </location>
</feature>
<feature type="glycosylation site" description="N-linked (GlcNAc...) asparagine" evidence="4">
    <location>
        <position position="26"/>
    </location>
</feature>
<protein>
    <recommendedName>
        <fullName>Potassium voltage-gated channel subfamily E member 1</fullName>
    </recommendedName>
    <alternativeName>
        <fullName>Delayed rectifier potassium channel subunit IsK</fullName>
        <shortName evidence="6">mISK</shortName>
    </alternativeName>
    <alternativeName>
        <fullName>IKs producing slow voltage-gated potassium channel subunit beta Mink</fullName>
    </alternativeName>
    <alternativeName>
        <fullName>Minimal potassium channel</fullName>
        <shortName evidence="6">MinK</shortName>
    </alternativeName>
</protein>
<reference key="1">
    <citation type="journal article" date="1991" name="EMBO J.">
        <title>Cloning, expression, pharmacology and regulation of a delayed rectifier K+ channel in mouse heart.</title>
        <authorList>
            <person name="Honore E."/>
            <person name="Attali B."/>
            <person name="Romey G."/>
            <person name="Heurteaux C."/>
            <person name="Ricard P."/>
            <person name="Lesage F."/>
            <person name="Lazdunski M."/>
            <person name="Barhanin J."/>
        </authorList>
    </citation>
    <scope>NUCLEOTIDE SEQUENCE [MRNA]</scope>
    <scope>PARTIAL PROTEIN SEQUENCE</scope>
    <source>
        <tissue>Heart</tissue>
    </source>
</reference>
<reference key="2">
    <citation type="journal article" date="1992" name="FEBS Lett.">
        <title>ISK, a slowly activating voltage-sensitive K+ channel. Characterization of multiple cDNAs and gene organization in the mouse.</title>
        <authorList>
            <person name="Lesage F."/>
            <person name="Attali B."/>
            <person name="Lazdunski M."/>
            <person name="Barhanin J."/>
        </authorList>
    </citation>
    <scope>NUCLEOTIDE SEQUENCE [MRNA]</scope>
</reference>
<reference key="3">
    <citation type="journal article" date="2005" name="Science">
        <title>The transcriptional landscape of the mammalian genome.</title>
        <authorList>
            <person name="Carninci P."/>
            <person name="Kasukawa T."/>
            <person name="Katayama S."/>
            <person name="Gough J."/>
            <person name="Frith M.C."/>
            <person name="Maeda N."/>
            <person name="Oyama R."/>
            <person name="Ravasi T."/>
            <person name="Lenhard B."/>
            <person name="Wells C."/>
            <person name="Kodzius R."/>
            <person name="Shimokawa K."/>
            <person name="Bajic V.B."/>
            <person name="Brenner S.E."/>
            <person name="Batalov S."/>
            <person name="Forrest A.R."/>
            <person name="Zavolan M."/>
            <person name="Davis M.J."/>
            <person name="Wilming L.G."/>
            <person name="Aidinis V."/>
            <person name="Allen J.E."/>
            <person name="Ambesi-Impiombato A."/>
            <person name="Apweiler R."/>
            <person name="Aturaliya R.N."/>
            <person name="Bailey T.L."/>
            <person name="Bansal M."/>
            <person name="Baxter L."/>
            <person name="Beisel K.W."/>
            <person name="Bersano T."/>
            <person name="Bono H."/>
            <person name="Chalk A.M."/>
            <person name="Chiu K.P."/>
            <person name="Choudhary V."/>
            <person name="Christoffels A."/>
            <person name="Clutterbuck D.R."/>
            <person name="Crowe M.L."/>
            <person name="Dalla E."/>
            <person name="Dalrymple B.P."/>
            <person name="de Bono B."/>
            <person name="Della Gatta G."/>
            <person name="di Bernardo D."/>
            <person name="Down T."/>
            <person name="Engstrom P."/>
            <person name="Fagiolini M."/>
            <person name="Faulkner G."/>
            <person name="Fletcher C.F."/>
            <person name="Fukushima T."/>
            <person name="Furuno M."/>
            <person name="Futaki S."/>
            <person name="Gariboldi M."/>
            <person name="Georgii-Hemming P."/>
            <person name="Gingeras T.R."/>
            <person name="Gojobori T."/>
            <person name="Green R.E."/>
            <person name="Gustincich S."/>
            <person name="Harbers M."/>
            <person name="Hayashi Y."/>
            <person name="Hensch T.K."/>
            <person name="Hirokawa N."/>
            <person name="Hill D."/>
            <person name="Huminiecki L."/>
            <person name="Iacono M."/>
            <person name="Ikeo K."/>
            <person name="Iwama A."/>
            <person name="Ishikawa T."/>
            <person name="Jakt M."/>
            <person name="Kanapin A."/>
            <person name="Katoh M."/>
            <person name="Kawasawa Y."/>
            <person name="Kelso J."/>
            <person name="Kitamura H."/>
            <person name="Kitano H."/>
            <person name="Kollias G."/>
            <person name="Krishnan S.P."/>
            <person name="Kruger A."/>
            <person name="Kummerfeld S.K."/>
            <person name="Kurochkin I.V."/>
            <person name="Lareau L.F."/>
            <person name="Lazarevic D."/>
            <person name="Lipovich L."/>
            <person name="Liu J."/>
            <person name="Liuni S."/>
            <person name="McWilliam S."/>
            <person name="Madan Babu M."/>
            <person name="Madera M."/>
            <person name="Marchionni L."/>
            <person name="Matsuda H."/>
            <person name="Matsuzawa S."/>
            <person name="Miki H."/>
            <person name="Mignone F."/>
            <person name="Miyake S."/>
            <person name="Morris K."/>
            <person name="Mottagui-Tabar S."/>
            <person name="Mulder N."/>
            <person name="Nakano N."/>
            <person name="Nakauchi H."/>
            <person name="Ng P."/>
            <person name="Nilsson R."/>
            <person name="Nishiguchi S."/>
            <person name="Nishikawa S."/>
            <person name="Nori F."/>
            <person name="Ohara O."/>
            <person name="Okazaki Y."/>
            <person name="Orlando V."/>
            <person name="Pang K.C."/>
            <person name="Pavan W.J."/>
            <person name="Pavesi G."/>
            <person name="Pesole G."/>
            <person name="Petrovsky N."/>
            <person name="Piazza S."/>
            <person name="Reed J."/>
            <person name="Reid J.F."/>
            <person name="Ring B.Z."/>
            <person name="Ringwald M."/>
            <person name="Rost B."/>
            <person name="Ruan Y."/>
            <person name="Salzberg S.L."/>
            <person name="Sandelin A."/>
            <person name="Schneider C."/>
            <person name="Schoenbach C."/>
            <person name="Sekiguchi K."/>
            <person name="Semple C.A."/>
            <person name="Seno S."/>
            <person name="Sessa L."/>
            <person name="Sheng Y."/>
            <person name="Shibata Y."/>
            <person name="Shimada H."/>
            <person name="Shimada K."/>
            <person name="Silva D."/>
            <person name="Sinclair B."/>
            <person name="Sperling S."/>
            <person name="Stupka E."/>
            <person name="Sugiura K."/>
            <person name="Sultana R."/>
            <person name="Takenaka Y."/>
            <person name="Taki K."/>
            <person name="Tammoja K."/>
            <person name="Tan S.L."/>
            <person name="Tang S."/>
            <person name="Taylor M.S."/>
            <person name="Tegner J."/>
            <person name="Teichmann S.A."/>
            <person name="Ueda H.R."/>
            <person name="van Nimwegen E."/>
            <person name="Verardo R."/>
            <person name="Wei C.L."/>
            <person name="Yagi K."/>
            <person name="Yamanishi H."/>
            <person name="Zabarovsky E."/>
            <person name="Zhu S."/>
            <person name="Zimmer A."/>
            <person name="Hide W."/>
            <person name="Bult C."/>
            <person name="Grimmond S.M."/>
            <person name="Teasdale R.D."/>
            <person name="Liu E.T."/>
            <person name="Brusic V."/>
            <person name="Quackenbush J."/>
            <person name="Wahlestedt C."/>
            <person name="Mattick J.S."/>
            <person name="Hume D.A."/>
            <person name="Kai C."/>
            <person name="Sasaki D."/>
            <person name="Tomaru Y."/>
            <person name="Fukuda S."/>
            <person name="Kanamori-Katayama M."/>
            <person name="Suzuki M."/>
            <person name="Aoki J."/>
            <person name="Arakawa T."/>
            <person name="Iida J."/>
            <person name="Imamura K."/>
            <person name="Itoh M."/>
            <person name="Kato T."/>
            <person name="Kawaji H."/>
            <person name="Kawagashira N."/>
            <person name="Kawashima T."/>
            <person name="Kojima M."/>
            <person name="Kondo S."/>
            <person name="Konno H."/>
            <person name="Nakano K."/>
            <person name="Ninomiya N."/>
            <person name="Nishio T."/>
            <person name="Okada M."/>
            <person name="Plessy C."/>
            <person name="Shibata K."/>
            <person name="Shiraki T."/>
            <person name="Suzuki S."/>
            <person name="Tagami M."/>
            <person name="Waki K."/>
            <person name="Watahiki A."/>
            <person name="Okamura-Oho Y."/>
            <person name="Suzuki H."/>
            <person name="Kawai J."/>
            <person name="Hayashizaki Y."/>
        </authorList>
    </citation>
    <scope>NUCLEOTIDE SEQUENCE [LARGE SCALE MRNA]</scope>
    <source>
        <strain>C57BL/6J</strain>
        <tissue>Skin</tissue>
    </source>
</reference>
<reference key="4">
    <citation type="journal article" date="1996" name="Nature">
        <title>K(V)LQT1 and IsK (minK) proteins associate to form the I(Ks) cardiac potassium current.</title>
        <authorList>
            <person name="Barhanin J."/>
            <person name="Lesage F."/>
            <person name="Guillemare E."/>
            <person name="Fink M."/>
            <person name="Lazdunski M."/>
            <person name="Romey G."/>
        </authorList>
    </citation>
    <scope>INTERACTION WITH KCNQ1</scope>
    <source>
        <tissue>Heart</tissue>
    </source>
</reference>
<gene>
    <name evidence="8" type="primary">Kcne1</name>
</gene>
<dbReference type="EMBL" id="X60457">
    <property type="protein sequence ID" value="CAA42990.1"/>
    <property type="molecule type" value="mRNA"/>
</dbReference>
<dbReference type="EMBL" id="AK028907">
    <property type="protein sequence ID" value="BAC26189.1"/>
    <property type="molecule type" value="mRNA"/>
</dbReference>
<dbReference type="CCDS" id="CCDS28336.1"/>
<dbReference type="PIR" id="S17307">
    <property type="entry name" value="S17307"/>
</dbReference>
<dbReference type="RefSeq" id="NP_001349385.1">
    <property type="nucleotide sequence ID" value="NM_001362456.1"/>
</dbReference>
<dbReference type="RefSeq" id="NP_032450.1">
    <property type="nucleotide sequence ID" value="NM_008424.3"/>
</dbReference>
<dbReference type="RefSeq" id="XP_006523004.1">
    <property type="nucleotide sequence ID" value="XM_006522941.3"/>
</dbReference>
<dbReference type="SMR" id="P23299"/>
<dbReference type="ComplexPortal" id="CPX-3198">
    <property type="entry name" value="Voltage-gated potassium channel complex variant 1"/>
</dbReference>
<dbReference type="ComplexPortal" id="CPX-3274">
    <property type="entry name" value="KCNQ1-KCNE1 I(Ks) channel complex"/>
</dbReference>
<dbReference type="CORUM" id="P23299"/>
<dbReference type="FunCoup" id="P23299">
    <property type="interactions" value="24"/>
</dbReference>
<dbReference type="STRING" id="10090.ENSMUSP00000052248"/>
<dbReference type="GlyCosmos" id="P23299">
    <property type="glycosylation" value="3 sites, No reported glycans"/>
</dbReference>
<dbReference type="GlyGen" id="P23299">
    <property type="glycosylation" value="3 sites"/>
</dbReference>
<dbReference type="PhosphoSitePlus" id="P23299"/>
<dbReference type="PaxDb" id="10090-ENSMUSP00000052248"/>
<dbReference type="ProteomicsDB" id="263594"/>
<dbReference type="DNASU" id="16509"/>
<dbReference type="Ensembl" id="ENSMUST00000051705.7">
    <property type="protein sequence ID" value="ENSMUSP00000052248.6"/>
    <property type="gene ID" value="ENSMUSG00000039639.8"/>
</dbReference>
<dbReference type="Ensembl" id="ENSMUST00000166707.3">
    <property type="protein sequence ID" value="ENSMUSP00000130866.2"/>
    <property type="gene ID" value="ENSMUSG00000039639.8"/>
</dbReference>
<dbReference type="GeneID" id="16509"/>
<dbReference type="KEGG" id="mmu:16509"/>
<dbReference type="UCSC" id="uc007zza.1">
    <property type="organism name" value="mouse"/>
</dbReference>
<dbReference type="AGR" id="MGI:96673"/>
<dbReference type="CTD" id="3753"/>
<dbReference type="MGI" id="MGI:96673">
    <property type="gene designation" value="Kcne1"/>
</dbReference>
<dbReference type="VEuPathDB" id="HostDB:ENSMUSG00000039639"/>
<dbReference type="eggNOG" id="ENOG502SG7D">
    <property type="taxonomic scope" value="Eukaryota"/>
</dbReference>
<dbReference type="GeneTree" id="ENSGT00940000154497"/>
<dbReference type="HOGENOM" id="CLU_159026_0_0_1"/>
<dbReference type="InParanoid" id="P23299"/>
<dbReference type="OMA" id="ESCRACY"/>
<dbReference type="OrthoDB" id="8772344at2759"/>
<dbReference type="PhylomeDB" id="P23299"/>
<dbReference type="TreeFam" id="TF335976"/>
<dbReference type="BioGRID-ORCS" id="16509">
    <property type="hits" value="2 hits in 79 CRISPR screens"/>
</dbReference>
<dbReference type="PRO" id="PR:P23299"/>
<dbReference type="Proteomes" id="UP000000589">
    <property type="component" value="Chromosome 16"/>
</dbReference>
<dbReference type="RNAct" id="P23299">
    <property type="molecule type" value="protein"/>
</dbReference>
<dbReference type="Bgee" id="ENSMUSG00000039639">
    <property type="expression patterns" value="Expressed in stria vascularis of cochlear duct and 44 other cell types or tissues"/>
</dbReference>
<dbReference type="ExpressionAtlas" id="P23299">
    <property type="expression patterns" value="baseline and differential"/>
</dbReference>
<dbReference type="GO" id="GO:0016324">
    <property type="term" value="C:apical plasma membrane"/>
    <property type="evidence" value="ECO:0000314"/>
    <property type="project" value="MGI"/>
</dbReference>
<dbReference type="GO" id="GO:0009986">
    <property type="term" value="C:cell surface"/>
    <property type="evidence" value="ECO:0007669"/>
    <property type="project" value="Ensembl"/>
</dbReference>
<dbReference type="GO" id="GO:0045121">
    <property type="term" value="C:membrane raft"/>
    <property type="evidence" value="ECO:0007669"/>
    <property type="project" value="UniProtKB-SubCell"/>
</dbReference>
<dbReference type="GO" id="GO:0008076">
    <property type="term" value="C:voltage-gated potassium channel complex"/>
    <property type="evidence" value="ECO:0000353"/>
    <property type="project" value="ComplexPortal"/>
</dbReference>
<dbReference type="GO" id="GO:0005251">
    <property type="term" value="F:delayed rectifier potassium channel activity"/>
    <property type="evidence" value="ECO:0000250"/>
    <property type="project" value="UniProtKB"/>
</dbReference>
<dbReference type="GO" id="GO:0015459">
    <property type="term" value="F:potassium channel regulator activity"/>
    <property type="evidence" value="ECO:0000314"/>
    <property type="project" value="UniProtKB"/>
</dbReference>
<dbReference type="GO" id="GO:0031433">
    <property type="term" value="F:telethonin binding"/>
    <property type="evidence" value="ECO:0007669"/>
    <property type="project" value="Ensembl"/>
</dbReference>
<dbReference type="GO" id="GO:0086003">
    <property type="term" value="P:cardiac muscle cell contraction"/>
    <property type="evidence" value="ECO:0000303"/>
    <property type="project" value="ComplexPortal"/>
</dbReference>
<dbReference type="GO" id="GO:0071320">
    <property type="term" value="P:cellular response to cAMP"/>
    <property type="evidence" value="ECO:0007669"/>
    <property type="project" value="Ensembl"/>
</dbReference>
<dbReference type="GO" id="GO:0002070">
    <property type="term" value="P:epithelial cell maturation"/>
    <property type="evidence" value="ECO:0000315"/>
    <property type="project" value="MGI"/>
</dbReference>
<dbReference type="GO" id="GO:0060047">
    <property type="term" value="P:heart contraction"/>
    <property type="evidence" value="ECO:0000315"/>
    <property type="project" value="MGI"/>
</dbReference>
<dbReference type="GO" id="GO:0086013">
    <property type="term" value="P:membrane repolarization during cardiac muscle cell action potential"/>
    <property type="evidence" value="ECO:0000303"/>
    <property type="project" value="ComplexPortal"/>
</dbReference>
<dbReference type="GO" id="GO:0098915">
    <property type="term" value="P:membrane repolarization during ventricular cardiac muscle cell action potential"/>
    <property type="evidence" value="ECO:0007669"/>
    <property type="project" value="Ensembl"/>
</dbReference>
<dbReference type="GO" id="GO:1902260">
    <property type="term" value="P:negative regulation of delayed rectifier potassium channel activity"/>
    <property type="evidence" value="ECO:0000250"/>
    <property type="project" value="UniProtKB"/>
</dbReference>
<dbReference type="GO" id="GO:1901381">
    <property type="term" value="P:positive regulation of potassium ion transmembrane transport"/>
    <property type="evidence" value="ECO:0007669"/>
    <property type="project" value="Ensembl"/>
</dbReference>
<dbReference type="GO" id="GO:0097623">
    <property type="term" value="P:potassium ion export across plasma membrane"/>
    <property type="evidence" value="ECO:0000303"/>
    <property type="project" value="ComplexPortal"/>
</dbReference>
<dbReference type="GO" id="GO:0071805">
    <property type="term" value="P:potassium ion transmembrane transport"/>
    <property type="evidence" value="ECO:0000315"/>
    <property type="project" value="MGI"/>
</dbReference>
<dbReference type="GO" id="GO:0086091">
    <property type="term" value="P:regulation of heart rate by cardiac conduction"/>
    <property type="evidence" value="ECO:0000315"/>
    <property type="project" value="MGI"/>
</dbReference>
<dbReference type="GO" id="GO:0060307">
    <property type="term" value="P:regulation of ventricular cardiac muscle cell membrane repolarization"/>
    <property type="evidence" value="ECO:0000303"/>
    <property type="project" value="ComplexPortal"/>
</dbReference>
<dbReference type="GO" id="GO:0033363">
    <property type="term" value="P:secretory granule organization"/>
    <property type="evidence" value="ECO:0000315"/>
    <property type="project" value="MGI"/>
</dbReference>
<dbReference type="GO" id="GO:0021750">
    <property type="term" value="P:vestibular nucleus development"/>
    <property type="evidence" value="ECO:0000315"/>
    <property type="project" value="MGI"/>
</dbReference>
<dbReference type="InterPro" id="IPR000369">
    <property type="entry name" value="K_chnl_KCNE"/>
</dbReference>
<dbReference type="InterPro" id="IPR005424">
    <property type="entry name" value="KCNE1"/>
</dbReference>
<dbReference type="PANTHER" id="PTHR15282:SF11">
    <property type="entry name" value="POTASSIUM VOLTAGE-GATED CHANNEL SUBFAMILY E MEMBER 1"/>
    <property type="match status" value="1"/>
</dbReference>
<dbReference type="PANTHER" id="PTHR15282">
    <property type="entry name" value="POTASSIUM VOLTAGE-GATED CHANNEL SUBFAMILY E MEMBER 1, 3"/>
    <property type="match status" value="1"/>
</dbReference>
<dbReference type="Pfam" id="PF02060">
    <property type="entry name" value="ISK_Channel"/>
    <property type="match status" value="1"/>
</dbReference>
<dbReference type="PRINTS" id="PR01604">
    <property type="entry name" value="KCNE1CHANNEL"/>
</dbReference>
<dbReference type="PRINTS" id="PR00168">
    <property type="entry name" value="KCNECHANNEL"/>
</dbReference>
<name>KCNE1_MOUSE</name>
<proteinExistence type="evidence at protein level"/>
<comment type="function">
    <text evidence="2">Ancillary protein that functions as a regulatory subunit of the voltage-gated potassium (Kv) channel complex composed of pore-forming and potassium-conducting alpha subunits and of regulatory beta subunits. KCNE1 beta subunit modulates the gating kinetics and enhances stability of the channel complex. Alters the gating of the delayed rectifier Kv channel containing KCNB1 alpha subunit. Associates with KCNQ1/KVLQT1 alpha subunit to form the slowly activating delayed rectifier cardiac potassium (IKs) channel responsible for ventricular muscle action potential repolarization. The outward current reaches its steady state only after 50 seconds. Assembly with KCNH2/HERG alpha subunit Kv channel may regulate the rapidly activating component of the delayed rectifying potassium current (IKr) in heart.</text>
</comment>
<comment type="subunit">
    <text evidence="2 3 5">Interacts with KCNB1. Interacts with KCNC2 (By similarity). Associates with KCNH2/HERG. Interacts with KCNQ1; targets the complex KCNQ1-KCNE1 to the membrane raft (By similarity) (PubMed:8900282).</text>
</comment>
<comment type="subcellular location">
    <subcellularLocation>
        <location evidence="2 3">Cell membrane</location>
        <topology evidence="2">Single-pass type I membrane protein</topology>
    </subcellularLocation>
    <subcellularLocation>
        <location evidence="3">Apical cell membrane</location>
    </subcellularLocation>
    <subcellularLocation>
        <location evidence="2">Membrane raft</location>
    </subcellularLocation>
    <text evidence="2 3">Colocalizes with KCNB1 at the plasma membrane (By similarity). Targets to the membrane raft when associated with KCNQ1 (By similarity).</text>
</comment>
<comment type="tissue specificity">
    <text>Restrictively localized in the apical membrane portion of epithelial cells.</text>
</comment>
<comment type="PTM">
    <text evidence="1">Phosphorylation inhibits the potassium current.</text>
</comment>
<comment type="PTM">
    <text evidence="1">N-glycosylation at Asn-26 occurs post-translationally, and requires prior cotranslational glycosylation at Asn-5.</text>
</comment>
<comment type="similarity">
    <text evidence="7">Belongs to the potassium channel KCNE family.</text>
</comment>
<evidence type="ECO:0000250" key="1"/>
<evidence type="ECO:0000250" key="2">
    <source>
        <dbReference type="UniProtKB" id="P15382"/>
    </source>
</evidence>
<evidence type="ECO:0000250" key="3">
    <source>
        <dbReference type="UniProtKB" id="P15383"/>
    </source>
</evidence>
<evidence type="ECO:0000255" key="4"/>
<evidence type="ECO:0000269" key="5">
    <source>
    </source>
</evidence>
<evidence type="ECO:0000303" key="6">
    <source>
    </source>
</evidence>
<evidence type="ECO:0000305" key="7"/>
<evidence type="ECO:0000312" key="8">
    <source>
        <dbReference type="MGI" id="MGI:96673"/>
    </source>
</evidence>
<organism>
    <name type="scientific">Mus musculus</name>
    <name type="common">Mouse</name>
    <dbReference type="NCBI Taxonomy" id="10090"/>
    <lineage>
        <taxon>Eukaryota</taxon>
        <taxon>Metazoa</taxon>
        <taxon>Chordata</taxon>
        <taxon>Craniata</taxon>
        <taxon>Vertebrata</taxon>
        <taxon>Euteleostomi</taxon>
        <taxon>Mammalia</taxon>
        <taxon>Eutheria</taxon>
        <taxon>Euarchontoglires</taxon>
        <taxon>Glires</taxon>
        <taxon>Rodentia</taxon>
        <taxon>Myomorpha</taxon>
        <taxon>Muroidea</taxon>
        <taxon>Muridae</taxon>
        <taxon>Murinae</taxon>
        <taxon>Mus</taxon>
        <taxon>Mus</taxon>
    </lineage>
</organism>
<sequence>MSLPNSTTVLPFLARLWQETAEQGGNVSGLARKSQLRDDSKLEALYILMVLGFFGFFTLGIMLSYIRSKKLEHSHDPFNVYIESDAWQEKGKAVFQARVLESFRACYVIENQAAVEQPATHLPELKPLS</sequence>